<proteinExistence type="inferred from homology"/>
<organism>
    <name type="scientific">Vibrio cholerae serotype O1 (strain M66-2)</name>
    <dbReference type="NCBI Taxonomy" id="579112"/>
    <lineage>
        <taxon>Bacteria</taxon>
        <taxon>Pseudomonadati</taxon>
        <taxon>Pseudomonadota</taxon>
        <taxon>Gammaproteobacteria</taxon>
        <taxon>Vibrionales</taxon>
        <taxon>Vibrionaceae</taxon>
        <taxon>Vibrio</taxon>
    </lineage>
</organism>
<reference key="1">
    <citation type="journal article" date="2008" name="PLoS ONE">
        <title>A recalibrated molecular clock and independent origins for the cholera pandemic clones.</title>
        <authorList>
            <person name="Feng L."/>
            <person name="Reeves P.R."/>
            <person name="Lan R."/>
            <person name="Ren Y."/>
            <person name="Gao C."/>
            <person name="Zhou Z."/>
            <person name="Ren Y."/>
            <person name="Cheng J."/>
            <person name="Wang W."/>
            <person name="Wang J."/>
            <person name="Qian W."/>
            <person name="Li D."/>
            <person name="Wang L."/>
        </authorList>
    </citation>
    <scope>NUCLEOTIDE SEQUENCE [LARGE SCALE GENOMIC DNA]</scope>
    <source>
        <strain>M66-2</strain>
    </source>
</reference>
<gene>
    <name evidence="1" type="primary">mnmC</name>
    <name type="ordered locus">VCM66_2033</name>
</gene>
<name>MNMC_VIBCM</name>
<sequence length="674" mass="74791">MFIMSSISHAQLGWNDAGTPVSDQFDDVYFSNVNGLAETRYVFLEQNHLPQRWHNDDQRRFVIAETGFGTGLNFLAVWQAFVAFREANPDAKLKELHFISFEKYPLSKSDLIQAHQAWPELAQFAQKLHKHYPLAIPECQRIVLNDGLVTLDLWFGDIKDCLPKVATQEQGLVDAWFLDGFAPSKNPEMWNQNLFAGMAKLAKHGCTCATFTSAGFVRRGLIDAGFAMKKVKGFGTKREMIAGSLSEKVPYTNIAPEFRFEATHGLQEVAIIGGGIASATLATTLARRGVAVTLYCADEKPAQGASGNRQGAVYPLLSGDHNAVSRVFAPAFLFARQWIEQAAEQINFDHDWCGVTQLMWDEKATDKLKSMLEGNFPTQLVHGLSAEQTNQQVGVPVDKASVHYPLGGWLSPAELTQGLIHLLEQQGKLTAHYQTPIDALTWQPETQLWQLRSGDTLMSHQCVVIASGHQFDSLSQTAELPLGKVKGQVSHIPTTETLSKINSVLCYDGYMTPVSQQNGYHCIGASYDRQHLDATFDPQAQHENAQKLIHCLPEQTWPLEVDVSGNQSRQGVRCVSRDHLPFVGNVGEFSKITEQYRDLAQQHQAEPIALYPQLYALVGLGSRGLSSAPLMAELLASQMCGDPMPLGVDLLEQLHPSRMWVRKLRKGKALTQKV</sequence>
<dbReference type="EC" id="2.1.1.61" evidence="1"/>
<dbReference type="EC" id="1.5.-.-" evidence="1"/>
<dbReference type="EMBL" id="CP001233">
    <property type="protein sequence ID" value="ACP06335.1"/>
    <property type="molecule type" value="Genomic_DNA"/>
</dbReference>
<dbReference type="SMR" id="C3LP59"/>
<dbReference type="KEGG" id="vcm:VCM66_2033"/>
<dbReference type="HOGENOM" id="CLU_022427_2_1_6"/>
<dbReference type="Proteomes" id="UP000001217">
    <property type="component" value="Chromosome I"/>
</dbReference>
<dbReference type="GO" id="GO:0005737">
    <property type="term" value="C:cytoplasm"/>
    <property type="evidence" value="ECO:0007669"/>
    <property type="project" value="UniProtKB-SubCell"/>
</dbReference>
<dbReference type="GO" id="GO:0050660">
    <property type="term" value="F:flavin adenine dinucleotide binding"/>
    <property type="evidence" value="ECO:0007669"/>
    <property type="project" value="UniProtKB-UniRule"/>
</dbReference>
<dbReference type="GO" id="GO:0016645">
    <property type="term" value="F:oxidoreductase activity, acting on the CH-NH group of donors"/>
    <property type="evidence" value="ECO:0007669"/>
    <property type="project" value="InterPro"/>
</dbReference>
<dbReference type="GO" id="GO:0004808">
    <property type="term" value="F:tRNA (5-methylaminomethyl-2-thiouridylate)(34)-methyltransferase activity"/>
    <property type="evidence" value="ECO:0007669"/>
    <property type="project" value="UniProtKB-EC"/>
</dbReference>
<dbReference type="GO" id="GO:0032259">
    <property type="term" value="P:methylation"/>
    <property type="evidence" value="ECO:0007669"/>
    <property type="project" value="UniProtKB-KW"/>
</dbReference>
<dbReference type="GO" id="GO:0002098">
    <property type="term" value="P:tRNA wobble uridine modification"/>
    <property type="evidence" value="ECO:0007669"/>
    <property type="project" value="TreeGrafter"/>
</dbReference>
<dbReference type="FunFam" id="3.40.50.150:FF:000107">
    <property type="entry name" value="tRNA 5-methylaminomethyl-2-thiouridine biosynthesis bifunctional protein MnmC"/>
    <property type="match status" value="1"/>
</dbReference>
<dbReference type="Gene3D" id="3.30.9.10">
    <property type="entry name" value="D-Amino Acid Oxidase, subunit A, domain 2"/>
    <property type="match status" value="1"/>
</dbReference>
<dbReference type="Gene3D" id="3.50.50.60">
    <property type="entry name" value="FAD/NAD(P)-binding domain"/>
    <property type="match status" value="1"/>
</dbReference>
<dbReference type="Gene3D" id="3.40.50.150">
    <property type="entry name" value="Vaccinia Virus protein VP39"/>
    <property type="match status" value="1"/>
</dbReference>
<dbReference type="HAMAP" id="MF_01102">
    <property type="entry name" value="MnmC"/>
    <property type="match status" value="1"/>
</dbReference>
<dbReference type="InterPro" id="IPR006076">
    <property type="entry name" value="FAD-dep_OxRdtase"/>
</dbReference>
<dbReference type="InterPro" id="IPR036188">
    <property type="entry name" value="FAD/NAD-bd_sf"/>
</dbReference>
<dbReference type="InterPro" id="IPR008471">
    <property type="entry name" value="MnmC-like_methylTransf"/>
</dbReference>
<dbReference type="InterPro" id="IPR029063">
    <property type="entry name" value="SAM-dependent_MTases_sf"/>
</dbReference>
<dbReference type="InterPro" id="IPR023032">
    <property type="entry name" value="tRNA_MAMT_biosynth_bifunc_MnmC"/>
</dbReference>
<dbReference type="InterPro" id="IPR047785">
    <property type="entry name" value="tRNA_MNMC2"/>
</dbReference>
<dbReference type="InterPro" id="IPR017610">
    <property type="entry name" value="tRNA_S-uridine_synth_MnmC_C"/>
</dbReference>
<dbReference type="NCBIfam" id="TIGR03197">
    <property type="entry name" value="MnmC_Cterm"/>
    <property type="match status" value="1"/>
</dbReference>
<dbReference type="NCBIfam" id="NF002481">
    <property type="entry name" value="PRK01747.1-2"/>
    <property type="match status" value="1"/>
</dbReference>
<dbReference type="NCBIfam" id="NF002484">
    <property type="entry name" value="PRK01747.1-5"/>
    <property type="match status" value="1"/>
</dbReference>
<dbReference type="NCBIfam" id="NF033855">
    <property type="entry name" value="tRNA_MNMC2"/>
    <property type="match status" value="1"/>
</dbReference>
<dbReference type="PANTHER" id="PTHR13847">
    <property type="entry name" value="SARCOSINE DEHYDROGENASE-RELATED"/>
    <property type="match status" value="1"/>
</dbReference>
<dbReference type="PANTHER" id="PTHR13847:SF283">
    <property type="entry name" value="TRNA 5-METHYLAMINOMETHYL-2-THIOURIDINE BIOSYNTHESIS BIFUNCTIONAL PROTEIN MNMC"/>
    <property type="match status" value="1"/>
</dbReference>
<dbReference type="Pfam" id="PF01266">
    <property type="entry name" value="DAO"/>
    <property type="match status" value="1"/>
</dbReference>
<dbReference type="Pfam" id="PF05430">
    <property type="entry name" value="Methyltransf_30"/>
    <property type="match status" value="1"/>
</dbReference>
<dbReference type="SUPFAM" id="SSF51905">
    <property type="entry name" value="FAD/NAD(P)-binding domain"/>
    <property type="match status" value="1"/>
</dbReference>
<comment type="function">
    <text evidence="1">Catalyzes the last two steps in the biosynthesis of 5-methylaminomethyl-2-thiouridine (mnm(5)s(2)U) at the wobble position (U34) in tRNA. Catalyzes the FAD-dependent demodification of cmnm(5)s(2)U34 to nm(5)s(2)U34, followed by the transfer of a methyl group from S-adenosyl-L-methionine to nm(5)s(2)U34, to form mnm(5)s(2)U34.</text>
</comment>
<comment type="catalytic activity">
    <reaction evidence="1">
        <text>5-aminomethyl-2-thiouridine(34) in tRNA + S-adenosyl-L-methionine = 5-methylaminomethyl-2-thiouridine(34) in tRNA + S-adenosyl-L-homocysteine + H(+)</text>
        <dbReference type="Rhea" id="RHEA:19569"/>
        <dbReference type="Rhea" id="RHEA-COMP:10195"/>
        <dbReference type="Rhea" id="RHEA-COMP:10197"/>
        <dbReference type="ChEBI" id="CHEBI:15378"/>
        <dbReference type="ChEBI" id="CHEBI:57856"/>
        <dbReference type="ChEBI" id="CHEBI:59789"/>
        <dbReference type="ChEBI" id="CHEBI:74454"/>
        <dbReference type="ChEBI" id="CHEBI:74455"/>
        <dbReference type="EC" id="2.1.1.61"/>
    </reaction>
</comment>
<comment type="cofactor">
    <cofactor evidence="1">
        <name>FAD</name>
        <dbReference type="ChEBI" id="CHEBI:57692"/>
    </cofactor>
</comment>
<comment type="subcellular location">
    <subcellularLocation>
        <location evidence="1">Cytoplasm</location>
    </subcellularLocation>
</comment>
<comment type="similarity">
    <text evidence="1">In the N-terminal section; belongs to the methyltransferase superfamily. tRNA (mnm(5)s(2)U34)-methyltransferase family.</text>
</comment>
<comment type="similarity">
    <text evidence="1">In the C-terminal section; belongs to the DAO family.</text>
</comment>
<feature type="chain" id="PRO_1000149904" description="tRNA 5-methylaminomethyl-2-thiouridine biosynthesis bifunctional protein MnmC">
    <location>
        <begin position="1"/>
        <end position="674"/>
    </location>
</feature>
<feature type="region of interest" description="tRNA (mnm(5)s(2)U34)-methyltransferase">
    <location>
        <begin position="1"/>
        <end position="246"/>
    </location>
</feature>
<feature type="region of interest" description="FAD-dependent cmnm(5)s(2)U34 oxidoreductase">
    <location>
        <begin position="272"/>
        <end position="674"/>
    </location>
</feature>
<evidence type="ECO:0000255" key="1">
    <source>
        <dbReference type="HAMAP-Rule" id="MF_01102"/>
    </source>
</evidence>
<protein>
    <recommendedName>
        <fullName evidence="1">tRNA 5-methylaminomethyl-2-thiouridine biosynthesis bifunctional protein MnmC</fullName>
        <shortName evidence="1">tRNA mnm(5)s(2)U biosynthesis bifunctional protein</shortName>
    </recommendedName>
    <domain>
        <recommendedName>
            <fullName evidence="1">tRNA (mnm(5)s(2)U34)-methyltransferase</fullName>
            <ecNumber evidence="1">2.1.1.61</ecNumber>
        </recommendedName>
    </domain>
    <domain>
        <recommendedName>
            <fullName evidence="1">FAD-dependent cmnm(5)s(2)U34 oxidoreductase</fullName>
            <ecNumber evidence="1">1.5.-.-</ecNumber>
        </recommendedName>
    </domain>
</protein>
<accession>C3LP59</accession>
<keyword id="KW-0963">Cytoplasm</keyword>
<keyword id="KW-0274">FAD</keyword>
<keyword id="KW-0285">Flavoprotein</keyword>
<keyword id="KW-0489">Methyltransferase</keyword>
<keyword id="KW-0511">Multifunctional enzyme</keyword>
<keyword id="KW-0560">Oxidoreductase</keyword>
<keyword id="KW-0949">S-adenosyl-L-methionine</keyword>
<keyword id="KW-0808">Transferase</keyword>
<keyword id="KW-0819">tRNA processing</keyword>